<accession>B1LCM9</accession>
<feature type="chain" id="PRO_1000123674" description="3-hydroxyacyl-[acyl-carrier-protein] dehydratase FabZ">
    <location>
        <begin position="1"/>
        <end position="137"/>
    </location>
</feature>
<feature type="active site" evidence="1">
    <location>
        <position position="46"/>
    </location>
</feature>
<comment type="function">
    <text evidence="1">Involved in unsaturated fatty acids biosynthesis. Catalyzes the dehydration of short chain beta-hydroxyacyl-ACPs and long chain saturated and unsaturated beta-hydroxyacyl-ACPs.</text>
</comment>
<comment type="catalytic activity">
    <reaction evidence="1">
        <text>a (3R)-hydroxyacyl-[ACP] = a (2E)-enoyl-[ACP] + H2O</text>
        <dbReference type="Rhea" id="RHEA:13097"/>
        <dbReference type="Rhea" id="RHEA-COMP:9925"/>
        <dbReference type="Rhea" id="RHEA-COMP:9945"/>
        <dbReference type="ChEBI" id="CHEBI:15377"/>
        <dbReference type="ChEBI" id="CHEBI:78784"/>
        <dbReference type="ChEBI" id="CHEBI:78827"/>
        <dbReference type="EC" id="4.2.1.59"/>
    </reaction>
</comment>
<comment type="subcellular location">
    <subcellularLocation>
        <location evidence="1">Cytoplasm</location>
    </subcellularLocation>
</comment>
<comment type="similarity">
    <text evidence="1">Belongs to the thioester dehydratase family. FabZ subfamily.</text>
</comment>
<protein>
    <recommendedName>
        <fullName evidence="1">3-hydroxyacyl-[acyl-carrier-protein] dehydratase FabZ</fullName>
        <ecNumber evidence="1">4.2.1.59</ecNumber>
    </recommendedName>
    <alternativeName>
        <fullName evidence="1">(3R)-hydroxymyristoyl-[acyl-carrier-protein] dehydratase</fullName>
        <shortName evidence="1">(3R)-hydroxymyristoyl-ACP dehydrase</shortName>
    </alternativeName>
    <alternativeName>
        <fullName evidence="1">Beta-hydroxyacyl-ACP dehydratase</fullName>
    </alternativeName>
</protein>
<dbReference type="EC" id="4.2.1.59" evidence="1"/>
<dbReference type="EMBL" id="CP000969">
    <property type="protein sequence ID" value="ACB08487.1"/>
    <property type="molecule type" value="Genomic_DNA"/>
</dbReference>
<dbReference type="RefSeq" id="WP_004080862.1">
    <property type="nucleotide sequence ID" value="NC_010483.1"/>
</dbReference>
<dbReference type="SMR" id="B1LCM9"/>
<dbReference type="KEGG" id="trq:TRQ2_0125"/>
<dbReference type="HOGENOM" id="CLU_078912_1_2_0"/>
<dbReference type="Proteomes" id="UP000001687">
    <property type="component" value="Chromosome"/>
</dbReference>
<dbReference type="GO" id="GO:0005737">
    <property type="term" value="C:cytoplasm"/>
    <property type="evidence" value="ECO:0007669"/>
    <property type="project" value="UniProtKB-SubCell"/>
</dbReference>
<dbReference type="GO" id="GO:0016020">
    <property type="term" value="C:membrane"/>
    <property type="evidence" value="ECO:0007669"/>
    <property type="project" value="GOC"/>
</dbReference>
<dbReference type="GO" id="GO:0019171">
    <property type="term" value="F:(3R)-hydroxyacyl-[acyl-carrier-protein] dehydratase activity"/>
    <property type="evidence" value="ECO:0007669"/>
    <property type="project" value="UniProtKB-EC"/>
</dbReference>
<dbReference type="GO" id="GO:0006633">
    <property type="term" value="P:fatty acid biosynthetic process"/>
    <property type="evidence" value="ECO:0007669"/>
    <property type="project" value="UniProtKB-UniRule"/>
</dbReference>
<dbReference type="GO" id="GO:0009245">
    <property type="term" value="P:lipid A biosynthetic process"/>
    <property type="evidence" value="ECO:0007669"/>
    <property type="project" value="UniProtKB-UniRule"/>
</dbReference>
<dbReference type="CDD" id="cd01288">
    <property type="entry name" value="FabZ"/>
    <property type="match status" value="1"/>
</dbReference>
<dbReference type="FunFam" id="3.10.129.10:FF:000001">
    <property type="entry name" value="3-hydroxyacyl-[acyl-carrier-protein] dehydratase FabZ"/>
    <property type="match status" value="1"/>
</dbReference>
<dbReference type="Gene3D" id="3.10.129.10">
    <property type="entry name" value="Hotdog Thioesterase"/>
    <property type="match status" value="1"/>
</dbReference>
<dbReference type="HAMAP" id="MF_00406">
    <property type="entry name" value="FabZ"/>
    <property type="match status" value="1"/>
</dbReference>
<dbReference type="InterPro" id="IPR013114">
    <property type="entry name" value="FabA_FabZ"/>
</dbReference>
<dbReference type="InterPro" id="IPR010084">
    <property type="entry name" value="FabZ"/>
</dbReference>
<dbReference type="InterPro" id="IPR029069">
    <property type="entry name" value="HotDog_dom_sf"/>
</dbReference>
<dbReference type="NCBIfam" id="TIGR01750">
    <property type="entry name" value="fabZ"/>
    <property type="match status" value="1"/>
</dbReference>
<dbReference type="NCBIfam" id="NF000582">
    <property type="entry name" value="PRK00006.1"/>
    <property type="match status" value="1"/>
</dbReference>
<dbReference type="PANTHER" id="PTHR30272">
    <property type="entry name" value="3-HYDROXYACYL-[ACYL-CARRIER-PROTEIN] DEHYDRATASE"/>
    <property type="match status" value="1"/>
</dbReference>
<dbReference type="PANTHER" id="PTHR30272:SF1">
    <property type="entry name" value="3-HYDROXYACYL-[ACYL-CARRIER-PROTEIN] DEHYDRATASE"/>
    <property type="match status" value="1"/>
</dbReference>
<dbReference type="Pfam" id="PF07977">
    <property type="entry name" value="FabA"/>
    <property type="match status" value="1"/>
</dbReference>
<dbReference type="SUPFAM" id="SSF54637">
    <property type="entry name" value="Thioesterase/thiol ester dehydrase-isomerase"/>
    <property type="match status" value="1"/>
</dbReference>
<name>FABZ_THESQ</name>
<keyword id="KW-0963">Cytoplasm</keyword>
<keyword id="KW-0441">Lipid A biosynthesis</keyword>
<keyword id="KW-0444">Lipid biosynthesis</keyword>
<keyword id="KW-0443">Lipid metabolism</keyword>
<keyword id="KW-0456">Lyase</keyword>
<evidence type="ECO:0000255" key="1">
    <source>
        <dbReference type="HAMAP-Rule" id="MF_00406"/>
    </source>
</evidence>
<reference key="1">
    <citation type="journal article" date="2011" name="J. Bacteriol.">
        <title>Genome sequence of Thermotoga sp. strain RQ2, a hyperthermophilic bacterium isolated from a geothermally heated region of the seafloor near Ribeira Quente, the Azores.</title>
        <authorList>
            <person name="Swithers K.S."/>
            <person name="DiPippo J.L."/>
            <person name="Bruce D.C."/>
            <person name="Detter C."/>
            <person name="Tapia R."/>
            <person name="Han S."/>
            <person name="Saunders E."/>
            <person name="Goodwin L.A."/>
            <person name="Han J."/>
            <person name="Woyke T."/>
            <person name="Pitluck S."/>
            <person name="Pennacchio L."/>
            <person name="Nolan M."/>
            <person name="Mikhailova N."/>
            <person name="Lykidis A."/>
            <person name="Land M.L."/>
            <person name="Brettin T."/>
            <person name="Stetter K.O."/>
            <person name="Nelson K.E."/>
            <person name="Gogarten J.P."/>
            <person name="Noll K.M."/>
        </authorList>
    </citation>
    <scope>NUCLEOTIDE SEQUENCE [LARGE SCALE GENOMIC DNA]</scope>
    <source>
        <strain>RQ2</strain>
    </source>
</reference>
<proteinExistence type="inferred from homology"/>
<sequence length="137" mass="15300">MNIDYVKSILPHRYPFLLVDGVIEESEDRIVAFKNISISDPVFQGHFPEYPIYPGVLIVEGLAQTAGILLLKSVEGIPLFLGIDEARFKKEVRPGDRLIYEVRKLGEKLGTVQVEGVAKVDDKIVAKARLLLGVKKK</sequence>
<organism>
    <name type="scientific">Thermotoga sp. (strain RQ2)</name>
    <dbReference type="NCBI Taxonomy" id="126740"/>
    <lineage>
        <taxon>Bacteria</taxon>
        <taxon>Thermotogati</taxon>
        <taxon>Thermotogota</taxon>
        <taxon>Thermotogae</taxon>
        <taxon>Thermotogales</taxon>
        <taxon>Thermotogaceae</taxon>
        <taxon>Thermotoga</taxon>
    </lineage>
</organism>
<gene>
    <name evidence="1" type="primary">fabZ</name>
    <name type="ordered locus">TRQ2_0125</name>
</gene>